<keyword id="KW-0012">Acyltransferase</keyword>
<keyword id="KW-1003">Cell membrane</keyword>
<keyword id="KW-0444">Lipid biosynthesis</keyword>
<keyword id="KW-0443">Lipid metabolism</keyword>
<keyword id="KW-0472">Membrane</keyword>
<keyword id="KW-0594">Phospholipid biosynthesis</keyword>
<keyword id="KW-1208">Phospholipid metabolism</keyword>
<keyword id="KW-1185">Reference proteome</keyword>
<keyword id="KW-0808">Transferase</keyword>
<sequence length="789" mass="88315">MTKPAADASAVLTAEDTLVLASTATPVEMELIMGWLGQQRARHPDSKFDILKLPPRNAPPAALTALVEQLEPGFASSPQSGEDRSIVPVRVIWLPPADRSRAGKVAALLPGRDPYHPSQRQQRRILRTDPRRARVVAGESAKVSELRQQWRDTTVAEHKRDFAQFVSRRALLALARAEYRILGPQYKSPRLVKPEMLASARFRAGLDRIPGATVEDAGKMLDELSTGWSQVSVDLVSVLGRLASRGFDPEFDYDEYQVAAMRAALEAHPAVLLFSHRSYIDGVVVPVAMQDNRLPPVHMFGGINLSFGLMGPLMRRSGMIFIRRNIGNDPLYKYVLKEYVGYVVEKRFNLSWSIEGTRSRTGKMLPPKLGLMSYVADAYLDGRSDDILLQGVSICFDQLHEITEYAAYARGAEKTPEGLRWLYNFIKAQGERNFGKIYVRFPEAVSMRQYLGAPHGELTQDPAAKRLALQKMSFEVAWRILQATPVTATGLVSALLLTTRGTALTLDQLHHTLQDSLDYLERKQSPVSTSALRLRSREGVRAAADALSNGHPVTRVDSGREPVWYIAPDDEHAAAFYRNSVIHAFLETSIVELALAHAKHAEGDRVAAFWAQAMRLRDLLKFDFYFADSTAFRANIAQEMAWHQDWEDHLGVGGNEIDAMLYAKRPLMSDAMLRVFFEAYEIVADVLRDAPPDIGPEELTELALGLGRQFVAQGRVRSSEPVSTLLFATARQVAVDQELIAPAADLAERRVAFRRELRNILRDFDYVEQIARNQFVACEFKARQGRDRI</sequence>
<reference key="1">
    <citation type="journal article" date="1998" name="Nature">
        <title>Deciphering the biology of Mycobacterium tuberculosis from the complete genome sequence.</title>
        <authorList>
            <person name="Cole S.T."/>
            <person name="Brosch R."/>
            <person name="Parkhill J."/>
            <person name="Garnier T."/>
            <person name="Churcher C.M."/>
            <person name="Harris D.E."/>
            <person name="Gordon S.V."/>
            <person name="Eiglmeier K."/>
            <person name="Gas S."/>
            <person name="Barry C.E. III"/>
            <person name="Tekaia F."/>
            <person name="Badcock K."/>
            <person name="Basham D."/>
            <person name="Brown D."/>
            <person name="Chillingworth T."/>
            <person name="Connor R."/>
            <person name="Davies R.M."/>
            <person name="Devlin K."/>
            <person name="Feltwell T."/>
            <person name="Gentles S."/>
            <person name="Hamlin N."/>
            <person name="Holroyd S."/>
            <person name="Hornsby T."/>
            <person name="Jagels K."/>
            <person name="Krogh A."/>
            <person name="McLean J."/>
            <person name="Moule S."/>
            <person name="Murphy L.D."/>
            <person name="Oliver S."/>
            <person name="Osborne J."/>
            <person name="Quail M.A."/>
            <person name="Rajandream M.A."/>
            <person name="Rogers J."/>
            <person name="Rutter S."/>
            <person name="Seeger K."/>
            <person name="Skelton S."/>
            <person name="Squares S."/>
            <person name="Squares R."/>
            <person name="Sulston J.E."/>
            <person name="Taylor K."/>
            <person name="Whitehead S."/>
            <person name="Barrell B.G."/>
        </authorList>
    </citation>
    <scope>NUCLEOTIDE SEQUENCE [LARGE SCALE GENOMIC DNA]</scope>
    <source>
        <strain>ATCC 25618 / H37Rv</strain>
    </source>
</reference>
<reference key="2">
    <citation type="journal article" date="2008" name="BMC Syst. Biol.">
        <title>targetTB: a target identification pipeline for Mycobacterium tuberculosis through an interactome, reactome and genome-scale structural analysis.</title>
        <authorList>
            <person name="Raman K."/>
            <person name="Yeturu K."/>
            <person name="Chandra N."/>
        </authorList>
    </citation>
    <scope>IDENTIFICATION AS A DRUG TARGET [LARGE SCALE ANALYSIS]</scope>
</reference>
<reference key="3">
    <citation type="journal article" date="2011" name="Mol. Cell. Proteomics">
        <title>Proteogenomic analysis of Mycobacterium tuberculosis by high resolution mass spectrometry.</title>
        <authorList>
            <person name="Kelkar D.S."/>
            <person name="Kumar D."/>
            <person name="Kumar P."/>
            <person name="Balakrishnan L."/>
            <person name="Muthusamy B."/>
            <person name="Yadav A.K."/>
            <person name="Shrivastava P."/>
            <person name="Marimuthu A."/>
            <person name="Anand S."/>
            <person name="Sundaram H."/>
            <person name="Kingsbury R."/>
            <person name="Harsha H.C."/>
            <person name="Nair B."/>
            <person name="Prasad T.S."/>
            <person name="Chauhan D.S."/>
            <person name="Katoch K."/>
            <person name="Katoch V.M."/>
            <person name="Kumar P."/>
            <person name="Chaerkady R."/>
            <person name="Ramachandran S."/>
            <person name="Dash D."/>
            <person name="Pandey A."/>
        </authorList>
    </citation>
    <scope>IDENTIFICATION BY MASS SPECTROMETRY [LARGE SCALE ANALYSIS]</scope>
    <source>
        <strain>ATCC 25618 / H37Rv</strain>
    </source>
</reference>
<evidence type="ECO:0000250" key="1"/>
<evidence type="ECO:0000305" key="2"/>
<dbReference type="EC" id="2.3.1.15"/>
<dbReference type="EMBL" id="AL123456">
    <property type="protein sequence ID" value="CCP45276.1"/>
    <property type="molecule type" value="Genomic_DNA"/>
</dbReference>
<dbReference type="PIR" id="A70868">
    <property type="entry name" value="A70868"/>
</dbReference>
<dbReference type="RefSeq" id="NP_216998.1">
    <property type="nucleotide sequence ID" value="NC_000962.3"/>
</dbReference>
<dbReference type="RefSeq" id="WP_003917012.1">
    <property type="nucleotide sequence ID" value="NZ_NVQJ01000067.1"/>
</dbReference>
<dbReference type="SMR" id="P9WI61"/>
<dbReference type="FunCoup" id="P9WI61">
    <property type="interactions" value="261"/>
</dbReference>
<dbReference type="STRING" id="83332.Rv2482c"/>
<dbReference type="PaxDb" id="83332-Rv2482c"/>
<dbReference type="GeneID" id="887848"/>
<dbReference type="KEGG" id="mtu:Rv2482c"/>
<dbReference type="KEGG" id="mtv:RVBD_2482c"/>
<dbReference type="TubercuList" id="Rv2482c"/>
<dbReference type="eggNOG" id="COG2937">
    <property type="taxonomic scope" value="Bacteria"/>
</dbReference>
<dbReference type="InParanoid" id="P9WI61"/>
<dbReference type="OrthoDB" id="335193at2"/>
<dbReference type="PhylomeDB" id="P9WI61"/>
<dbReference type="UniPathway" id="UPA00557">
    <property type="reaction ID" value="UER00612"/>
</dbReference>
<dbReference type="Proteomes" id="UP000001584">
    <property type="component" value="Chromosome"/>
</dbReference>
<dbReference type="GO" id="GO:0005886">
    <property type="term" value="C:plasma membrane"/>
    <property type="evidence" value="ECO:0007005"/>
    <property type="project" value="MTBBASE"/>
</dbReference>
<dbReference type="GO" id="GO:0004366">
    <property type="term" value="F:glycerol-3-phosphate O-acyltransferase activity"/>
    <property type="evidence" value="ECO:0007669"/>
    <property type="project" value="UniProtKB-UniRule"/>
</dbReference>
<dbReference type="GO" id="GO:0016024">
    <property type="term" value="P:CDP-diacylglycerol biosynthetic process"/>
    <property type="evidence" value="ECO:0007669"/>
    <property type="project" value="UniProtKB-UniRule"/>
</dbReference>
<dbReference type="CDD" id="cd07993">
    <property type="entry name" value="LPLAT_DHAPAT-like"/>
    <property type="match status" value="1"/>
</dbReference>
<dbReference type="HAMAP" id="MF_00393">
    <property type="entry name" value="Glyc3P_acyltrans"/>
    <property type="match status" value="1"/>
</dbReference>
<dbReference type="InterPro" id="IPR022284">
    <property type="entry name" value="GPAT/DHAPAT"/>
</dbReference>
<dbReference type="InterPro" id="IPR045520">
    <property type="entry name" value="GPAT/DHAPAT_C"/>
</dbReference>
<dbReference type="InterPro" id="IPR041728">
    <property type="entry name" value="GPAT/DHAPAT_LPLAT"/>
</dbReference>
<dbReference type="InterPro" id="IPR028354">
    <property type="entry name" value="GPAT_PlsB"/>
</dbReference>
<dbReference type="InterPro" id="IPR002123">
    <property type="entry name" value="Plipid/glycerol_acylTrfase"/>
</dbReference>
<dbReference type="NCBIfam" id="NF002886">
    <property type="entry name" value="PRK03355.1"/>
    <property type="match status" value="1"/>
</dbReference>
<dbReference type="PANTHER" id="PTHR12563:SF17">
    <property type="entry name" value="DIHYDROXYACETONE PHOSPHATE ACYLTRANSFERASE"/>
    <property type="match status" value="1"/>
</dbReference>
<dbReference type="PANTHER" id="PTHR12563">
    <property type="entry name" value="GLYCEROL-3-PHOSPHATE ACYLTRANSFERASE"/>
    <property type="match status" value="1"/>
</dbReference>
<dbReference type="Pfam" id="PF01553">
    <property type="entry name" value="Acyltransferase"/>
    <property type="match status" value="1"/>
</dbReference>
<dbReference type="Pfam" id="PF19277">
    <property type="entry name" value="GPAT_C"/>
    <property type="match status" value="1"/>
</dbReference>
<dbReference type="PIRSF" id="PIRSF500064">
    <property type="entry name" value="GPAT"/>
    <property type="match status" value="1"/>
</dbReference>
<dbReference type="PIRSF" id="PIRSF000437">
    <property type="entry name" value="GPAT_DHAPAT"/>
    <property type="match status" value="1"/>
</dbReference>
<dbReference type="SMART" id="SM00563">
    <property type="entry name" value="PlsC"/>
    <property type="match status" value="1"/>
</dbReference>
<dbReference type="SUPFAM" id="SSF69593">
    <property type="entry name" value="Glycerol-3-phosphate (1)-acyltransferase"/>
    <property type="match status" value="1"/>
</dbReference>
<accession>P9WI61</accession>
<accession>L0T9X9</accession>
<accession>O53207</accession>
<gene>
    <name type="primary">plsB</name>
    <name type="synonym">plsB2</name>
    <name type="ordered locus">Rv2482c</name>
    <name type="ORF">MTV008.38c</name>
</gene>
<name>PLSB_MYCTU</name>
<organism>
    <name type="scientific">Mycobacterium tuberculosis (strain ATCC 25618 / H37Rv)</name>
    <dbReference type="NCBI Taxonomy" id="83332"/>
    <lineage>
        <taxon>Bacteria</taxon>
        <taxon>Bacillati</taxon>
        <taxon>Actinomycetota</taxon>
        <taxon>Actinomycetes</taxon>
        <taxon>Mycobacteriales</taxon>
        <taxon>Mycobacteriaceae</taxon>
        <taxon>Mycobacterium</taxon>
        <taxon>Mycobacterium tuberculosis complex</taxon>
    </lineage>
</organism>
<feature type="chain" id="PRO_0000195225" description="Glycerol-3-phosphate acyltransferase">
    <location>
        <begin position="1"/>
        <end position="789"/>
    </location>
</feature>
<feature type="short sequence motif" description="HXXXXD motif">
    <location>
        <begin position="276"/>
        <end position="281"/>
    </location>
</feature>
<protein>
    <recommendedName>
        <fullName>Glycerol-3-phosphate acyltransferase</fullName>
        <shortName>GPAT</shortName>
        <ecNumber>2.3.1.15</ecNumber>
    </recommendedName>
</protein>
<proteinExistence type="evidence at protein level"/>
<comment type="catalytic activity">
    <reaction>
        <text>sn-glycerol 3-phosphate + an acyl-CoA = a 1-acyl-sn-glycero-3-phosphate + CoA</text>
        <dbReference type="Rhea" id="RHEA:15325"/>
        <dbReference type="ChEBI" id="CHEBI:57287"/>
        <dbReference type="ChEBI" id="CHEBI:57597"/>
        <dbReference type="ChEBI" id="CHEBI:57970"/>
        <dbReference type="ChEBI" id="CHEBI:58342"/>
        <dbReference type="EC" id="2.3.1.15"/>
    </reaction>
</comment>
<comment type="pathway">
    <text>Phospholipid metabolism; CDP-diacylglycerol biosynthesis; CDP-diacylglycerol from sn-glycerol 3-phosphate: step 1/3.</text>
</comment>
<comment type="subcellular location">
    <subcellularLocation>
        <location evidence="1">Cell membrane</location>
        <topology evidence="1">Peripheral membrane protein</topology>
        <orientation evidence="1">Cytoplasmic side</orientation>
    </subcellularLocation>
</comment>
<comment type="domain">
    <text evidence="1">The HXXXXD motif is essential for acyltransferase activity and may constitute the binding site for the phosphate moiety of the glycerol-3-phosphate.</text>
</comment>
<comment type="miscellaneous">
    <text>Was identified as a high-confidence drug target.</text>
</comment>
<comment type="similarity">
    <text evidence="2">Belongs to the GPAT/DAPAT family.</text>
</comment>